<organism>
    <name type="scientific">Treponema pallidum (strain Nichols)</name>
    <dbReference type="NCBI Taxonomy" id="243276"/>
    <lineage>
        <taxon>Bacteria</taxon>
        <taxon>Pseudomonadati</taxon>
        <taxon>Spirochaetota</taxon>
        <taxon>Spirochaetia</taxon>
        <taxon>Spirochaetales</taxon>
        <taxon>Treponemataceae</taxon>
        <taxon>Treponema</taxon>
    </lineage>
</organism>
<name>RS4_TREPA</name>
<dbReference type="EMBL" id="AE000520">
    <property type="protein sequence ID" value="AAC65295.1"/>
    <property type="molecule type" value="Genomic_DNA"/>
</dbReference>
<dbReference type="PIR" id="D71339">
    <property type="entry name" value="D71339"/>
</dbReference>
<dbReference type="RefSeq" id="WP_010881755.1">
    <property type="nucleotide sequence ID" value="NC_021490.2"/>
</dbReference>
<dbReference type="SMR" id="O83328"/>
<dbReference type="STRING" id="243276.TP_0306"/>
<dbReference type="EnsemblBacteria" id="AAC65295">
    <property type="protein sequence ID" value="AAC65295"/>
    <property type="gene ID" value="TP_0306"/>
</dbReference>
<dbReference type="GeneID" id="93876092"/>
<dbReference type="KEGG" id="tpa:TP_0306"/>
<dbReference type="KEGG" id="tpw:TPANIC_0306"/>
<dbReference type="eggNOG" id="COG0522">
    <property type="taxonomic scope" value="Bacteria"/>
</dbReference>
<dbReference type="HOGENOM" id="CLU_092403_0_4_12"/>
<dbReference type="OrthoDB" id="9803672at2"/>
<dbReference type="Proteomes" id="UP000000811">
    <property type="component" value="Chromosome"/>
</dbReference>
<dbReference type="GO" id="GO:0015935">
    <property type="term" value="C:small ribosomal subunit"/>
    <property type="evidence" value="ECO:0007669"/>
    <property type="project" value="InterPro"/>
</dbReference>
<dbReference type="GO" id="GO:0019843">
    <property type="term" value="F:rRNA binding"/>
    <property type="evidence" value="ECO:0007669"/>
    <property type="project" value="UniProtKB-UniRule"/>
</dbReference>
<dbReference type="GO" id="GO:0003735">
    <property type="term" value="F:structural constituent of ribosome"/>
    <property type="evidence" value="ECO:0007669"/>
    <property type="project" value="InterPro"/>
</dbReference>
<dbReference type="GO" id="GO:0042274">
    <property type="term" value="P:ribosomal small subunit biogenesis"/>
    <property type="evidence" value="ECO:0007669"/>
    <property type="project" value="TreeGrafter"/>
</dbReference>
<dbReference type="GO" id="GO:0006412">
    <property type="term" value="P:translation"/>
    <property type="evidence" value="ECO:0007669"/>
    <property type="project" value="UniProtKB-UniRule"/>
</dbReference>
<dbReference type="CDD" id="cd00165">
    <property type="entry name" value="S4"/>
    <property type="match status" value="1"/>
</dbReference>
<dbReference type="FunFam" id="3.10.290.10:FF:000001">
    <property type="entry name" value="30S ribosomal protein S4"/>
    <property type="match status" value="1"/>
</dbReference>
<dbReference type="Gene3D" id="1.10.1050.10">
    <property type="entry name" value="Ribosomal Protein S4 Delta 41, Chain A, domain 1"/>
    <property type="match status" value="1"/>
</dbReference>
<dbReference type="Gene3D" id="3.10.290.10">
    <property type="entry name" value="RNA-binding S4 domain"/>
    <property type="match status" value="1"/>
</dbReference>
<dbReference type="HAMAP" id="MF_01306_B">
    <property type="entry name" value="Ribosomal_uS4_B"/>
    <property type="match status" value="1"/>
</dbReference>
<dbReference type="InterPro" id="IPR022801">
    <property type="entry name" value="Ribosomal_uS4"/>
</dbReference>
<dbReference type="InterPro" id="IPR005709">
    <property type="entry name" value="Ribosomal_uS4_bac-type"/>
</dbReference>
<dbReference type="InterPro" id="IPR018079">
    <property type="entry name" value="Ribosomal_uS4_CS"/>
</dbReference>
<dbReference type="InterPro" id="IPR001912">
    <property type="entry name" value="Ribosomal_uS4_N"/>
</dbReference>
<dbReference type="InterPro" id="IPR002942">
    <property type="entry name" value="S4_RNA-bd"/>
</dbReference>
<dbReference type="InterPro" id="IPR036986">
    <property type="entry name" value="S4_RNA-bd_sf"/>
</dbReference>
<dbReference type="NCBIfam" id="NF003717">
    <property type="entry name" value="PRK05327.1"/>
    <property type="match status" value="1"/>
</dbReference>
<dbReference type="NCBIfam" id="TIGR01017">
    <property type="entry name" value="rpsD_bact"/>
    <property type="match status" value="1"/>
</dbReference>
<dbReference type="PANTHER" id="PTHR11831">
    <property type="entry name" value="30S 40S RIBOSOMAL PROTEIN"/>
    <property type="match status" value="1"/>
</dbReference>
<dbReference type="PANTHER" id="PTHR11831:SF4">
    <property type="entry name" value="SMALL RIBOSOMAL SUBUNIT PROTEIN US4M"/>
    <property type="match status" value="1"/>
</dbReference>
<dbReference type="Pfam" id="PF00163">
    <property type="entry name" value="Ribosomal_S4"/>
    <property type="match status" value="1"/>
</dbReference>
<dbReference type="Pfam" id="PF01479">
    <property type="entry name" value="S4"/>
    <property type="match status" value="1"/>
</dbReference>
<dbReference type="SMART" id="SM01390">
    <property type="entry name" value="Ribosomal_S4"/>
    <property type="match status" value="1"/>
</dbReference>
<dbReference type="SMART" id="SM00363">
    <property type="entry name" value="S4"/>
    <property type="match status" value="1"/>
</dbReference>
<dbReference type="SUPFAM" id="SSF55174">
    <property type="entry name" value="Alpha-L RNA-binding motif"/>
    <property type="match status" value="1"/>
</dbReference>
<dbReference type="PROSITE" id="PS00632">
    <property type="entry name" value="RIBOSOMAL_S4"/>
    <property type="match status" value="1"/>
</dbReference>
<dbReference type="PROSITE" id="PS50889">
    <property type="entry name" value="S4"/>
    <property type="match status" value="1"/>
</dbReference>
<comment type="function">
    <text evidence="1">One of the primary rRNA binding proteins, it binds directly to 16S rRNA where it nucleates assembly of the body of the 30S subunit.</text>
</comment>
<comment type="function">
    <text evidence="1">With S5 and S12 plays an important role in translational accuracy.</text>
</comment>
<comment type="subunit">
    <text evidence="1">Part of the 30S ribosomal subunit. Contacts protein S5. The interaction surface between S4 and S5 is involved in control of translational fidelity.</text>
</comment>
<comment type="similarity">
    <text evidence="1">Belongs to the universal ribosomal protein uS4 family.</text>
</comment>
<accession>O83328</accession>
<proteinExistence type="inferred from homology"/>
<feature type="chain" id="PRO_0000132486" description="Small ribosomal subunit protein uS4">
    <location>
        <begin position="1"/>
        <end position="204"/>
    </location>
</feature>
<feature type="domain" description="S4 RNA-binding" evidence="1">
    <location>
        <begin position="95"/>
        <end position="157"/>
    </location>
</feature>
<keyword id="KW-1185">Reference proteome</keyword>
<keyword id="KW-0687">Ribonucleoprotein</keyword>
<keyword id="KW-0689">Ribosomal protein</keyword>
<keyword id="KW-0694">RNA-binding</keyword>
<keyword id="KW-0699">rRNA-binding</keyword>
<evidence type="ECO:0000255" key="1">
    <source>
        <dbReference type="HAMAP-Rule" id="MF_01306"/>
    </source>
</evidence>
<evidence type="ECO:0000305" key="2"/>
<gene>
    <name evidence="1" type="primary">rpsD</name>
    <name type="ordered locus">TP_0306</name>
</gene>
<protein>
    <recommendedName>
        <fullName evidence="1">Small ribosomal subunit protein uS4</fullName>
    </recommendedName>
    <alternativeName>
        <fullName evidence="2">30S ribosomal protein S4</fullName>
    </alternativeName>
</protein>
<sequence>MAVKRARGKIVRRLGINIFGNPKYTRLLGKKPAPPGKEHGVKQRAKVSVYGEQLKEKQKFRFAYGMSERQFRNLFAQAHRMKGVTGNNMLSLMERRLDNTVFRMGFAISRVQARQMVSHRYFLINGKTANIPSMRISAHDVITTKNRKGIHSIIRHNLTLSQGQRGSWLNVDEEQLSATVSELPRAQDIHPVGNIQHIVEYYSR</sequence>
<reference key="1">
    <citation type="journal article" date="1998" name="Science">
        <title>Complete genome sequence of Treponema pallidum, the syphilis spirochete.</title>
        <authorList>
            <person name="Fraser C.M."/>
            <person name="Norris S.J."/>
            <person name="Weinstock G.M."/>
            <person name="White O."/>
            <person name="Sutton G.G."/>
            <person name="Dodson R.J."/>
            <person name="Gwinn M.L."/>
            <person name="Hickey E.K."/>
            <person name="Clayton R.A."/>
            <person name="Ketchum K.A."/>
            <person name="Sodergren E."/>
            <person name="Hardham J.M."/>
            <person name="McLeod M.P."/>
            <person name="Salzberg S.L."/>
            <person name="Peterson J.D."/>
            <person name="Khalak H.G."/>
            <person name="Richardson D.L."/>
            <person name="Howell J.K."/>
            <person name="Chidambaram M."/>
            <person name="Utterback T.R."/>
            <person name="McDonald L.A."/>
            <person name="Artiach P."/>
            <person name="Bowman C."/>
            <person name="Cotton M.D."/>
            <person name="Fujii C."/>
            <person name="Garland S.A."/>
            <person name="Hatch B."/>
            <person name="Horst K."/>
            <person name="Roberts K.M."/>
            <person name="Sandusky M."/>
            <person name="Weidman J.F."/>
            <person name="Smith H.O."/>
            <person name="Venter J.C."/>
        </authorList>
    </citation>
    <scope>NUCLEOTIDE SEQUENCE [LARGE SCALE GENOMIC DNA]</scope>
    <source>
        <strain>Nichols</strain>
    </source>
</reference>